<comment type="function">
    <text evidence="1">Folate-binding protein involved in regulating the level of ATP-DnaA and in the modification of some tRNAs. It is probably a key factor in regulatory networks that act via tRNA modification, such as initiation of chromosomal replication.</text>
</comment>
<comment type="subcellular location">
    <subcellularLocation>
        <location evidence="1">Cytoplasm</location>
    </subcellularLocation>
</comment>
<comment type="similarity">
    <text evidence="1">Belongs to the tRNA-modifying YgfZ family.</text>
</comment>
<accession>B1JNT4</accession>
<evidence type="ECO:0000255" key="1">
    <source>
        <dbReference type="HAMAP-Rule" id="MF_01175"/>
    </source>
</evidence>
<gene>
    <name type="ordered locus">YPK_0875</name>
</gene>
<sequence>MAYHTPFAAQPPVASSGLPLTLISLDDWALVTLTGADRVKYLQGQVTADIDALSADQHVLCAHCDAKGKMWSNLRLFYRGEGLAFIERRSLLDNQLSELKKYAVFSKVVIEPQPDAVLIGVAGSQAKTALAEIFTELPSAEHPVTQMGNSTLLHFSLPAERFLLVTDTEQAQQLVEKLAGRAQFNDSKQWLALDIEAGFPIIDAANSAQFIPQATNIQALNGISFTKGCYTGQEMVARAKYRGANKRALYWLAGNASRVPAAGEDLEWQLGENWRRTGTVLSAIQLNDGTVWVQAVLNNDLAADSVLRVRDDALGTLAIQPLPYSLAEDK</sequence>
<keyword id="KW-0963">Cytoplasm</keyword>
<keyword id="KW-0290">Folate-binding</keyword>
<keyword id="KW-0819">tRNA processing</keyword>
<protein>
    <recommendedName>
        <fullName evidence="1">tRNA-modifying protein YgfZ</fullName>
    </recommendedName>
</protein>
<feature type="chain" id="PRO_1000138091" description="tRNA-modifying protein YgfZ">
    <location>
        <begin position="1"/>
        <end position="330"/>
    </location>
</feature>
<feature type="binding site" evidence="1">
    <location>
        <position position="28"/>
    </location>
    <ligand>
        <name>folate</name>
        <dbReference type="ChEBI" id="CHEBI:62501"/>
    </ligand>
</feature>
<feature type="binding site" evidence="1">
    <location>
        <position position="190"/>
    </location>
    <ligand>
        <name>folate</name>
        <dbReference type="ChEBI" id="CHEBI:62501"/>
    </ligand>
</feature>
<organism>
    <name type="scientific">Yersinia pseudotuberculosis serotype O:3 (strain YPIII)</name>
    <dbReference type="NCBI Taxonomy" id="502800"/>
    <lineage>
        <taxon>Bacteria</taxon>
        <taxon>Pseudomonadati</taxon>
        <taxon>Pseudomonadota</taxon>
        <taxon>Gammaproteobacteria</taxon>
        <taxon>Enterobacterales</taxon>
        <taxon>Yersiniaceae</taxon>
        <taxon>Yersinia</taxon>
    </lineage>
</organism>
<name>YGFZ_YERPY</name>
<reference key="1">
    <citation type="submission" date="2008-02" db="EMBL/GenBank/DDBJ databases">
        <title>Complete sequence of Yersinia pseudotuberculosis YPIII.</title>
        <authorList>
            <consortium name="US DOE Joint Genome Institute"/>
            <person name="Copeland A."/>
            <person name="Lucas S."/>
            <person name="Lapidus A."/>
            <person name="Glavina del Rio T."/>
            <person name="Dalin E."/>
            <person name="Tice H."/>
            <person name="Bruce D."/>
            <person name="Goodwin L."/>
            <person name="Pitluck S."/>
            <person name="Munk A.C."/>
            <person name="Brettin T."/>
            <person name="Detter J.C."/>
            <person name="Han C."/>
            <person name="Tapia R."/>
            <person name="Schmutz J."/>
            <person name="Larimer F."/>
            <person name="Land M."/>
            <person name="Hauser L."/>
            <person name="Challacombe J.F."/>
            <person name="Green L."/>
            <person name="Lindler L.E."/>
            <person name="Nikolich M.P."/>
            <person name="Richardson P."/>
        </authorList>
    </citation>
    <scope>NUCLEOTIDE SEQUENCE [LARGE SCALE GENOMIC DNA]</scope>
    <source>
        <strain>YPIII</strain>
    </source>
</reference>
<proteinExistence type="inferred from homology"/>
<dbReference type="EMBL" id="CP000950">
    <property type="protein sequence ID" value="ACA67176.1"/>
    <property type="molecule type" value="Genomic_DNA"/>
</dbReference>
<dbReference type="SMR" id="B1JNT4"/>
<dbReference type="KEGG" id="ypy:YPK_0875"/>
<dbReference type="PATRIC" id="fig|502800.11.peg.1501"/>
<dbReference type="GO" id="GO:0005737">
    <property type="term" value="C:cytoplasm"/>
    <property type="evidence" value="ECO:0007669"/>
    <property type="project" value="UniProtKB-SubCell"/>
</dbReference>
<dbReference type="GO" id="GO:0005542">
    <property type="term" value="F:folic acid binding"/>
    <property type="evidence" value="ECO:0007669"/>
    <property type="project" value="UniProtKB-UniRule"/>
</dbReference>
<dbReference type="GO" id="GO:0016226">
    <property type="term" value="P:iron-sulfur cluster assembly"/>
    <property type="evidence" value="ECO:0007669"/>
    <property type="project" value="TreeGrafter"/>
</dbReference>
<dbReference type="GO" id="GO:0009451">
    <property type="term" value="P:RNA modification"/>
    <property type="evidence" value="ECO:0007669"/>
    <property type="project" value="InterPro"/>
</dbReference>
<dbReference type="GO" id="GO:0008033">
    <property type="term" value="P:tRNA processing"/>
    <property type="evidence" value="ECO:0007669"/>
    <property type="project" value="UniProtKB-UniRule"/>
</dbReference>
<dbReference type="FunFam" id="2.40.30.160:FF:000001">
    <property type="entry name" value="tRNA-modifying protein YgfZ"/>
    <property type="match status" value="1"/>
</dbReference>
<dbReference type="FunFam" id="3.30.70.1400:FF:000002">
    <property type="entry name" value="tRNA-modifying protein YgfZ"/>
    <property type="match status" value="1"/>
</dbReference>
<dbReference type="FunFam" id="3.30.70.1630:FF:000001">
    <property type="entry name" value="tRNA-modifying protein YgfZ"/>
    <property type="match status" value="1"/>
</dbReference>
<dbReference type="Gene3D" id="2.40.30.160">
    <property type="match status" value="1"/>
</dbReference>
<dbReference type="Gene3D" id="3.30.70.1630">
    <property type="match status" value="1"/>
</dbReference>
<dbReference type="Gene3D" id="3.30.70.1400">
    <property type="entry name" value="Aminomethyltransferase beta-barrel domains"/>
    <property type="match status" value="1"/>
</dbReference>
<dbReference type="HAMAP" id="MF_01175">
    <property type="entry name" value="tRNA_modifying_YgfZ"/>
    <property type="match status" value="1"/>
</dbReference>
<dbReference type="InterPro" id="IPR029043">
    <property type="entry name" value="GcvT/YgfZ_C"/>
</dbReference>
<dbReference type="InterPro" id="IPR023758">
    <property type="entry name" value="tRNA-modifying_YgfZ"/>
</dbReference>
<dbReference type="InterPro" id="IPR045179">
    <property type="entry name" value="YgfZ/GcvT"/>
</dbReference>
<dbReference type="InterPro" id="IPR017703">
    <property type="entry name" value="YgfZ/GcvT_CS"/>
</dbReference>
<dbReference type="InterPro" id="IPR048451">
    <property type="entry name" value="YgfZ_barrel"/>
</dbReference>
<dbReference type="NCBIfam" id="NF007110">
    <property type="entry name" value="PRK09559.1"/>
    <property type="match status" value="1"/>
</dbReference>
<dbReference type="NCBIfam" id="TIGR03317">
    <property type="entry name" value="ygfZ_signature"/>
    <property type="match status" value="1"/>
</dbReference>
<dbReference type="PANTHER" id="PTHR22602">
    <property type="entry name" value="TRANSFERASE CAF17, MITOCHONDRIAL-RELATED"/>
    <property type="match status" value="1"/>
</dbReference>
<dbReference type="PANTHER" id="PTHR22602:SF0">
    <property type="entry name" value="TRANSFERASE CAF17, MITOCHONDRIAL-RELATED"/>
    <property type="match status" value="1"/>
</dbReference>
<dbReference type="Pfam" id="PF21130">
    <property type="entry name" value="YgfZ_barrel"/>
    <property type="match status" value="1"/>
</dbReference>
<dbReference type="SUPFAM" id="SSF101790">
    <property type="entry name" value="Aminomethyltransferase beta-barrel domain"/>
    <property type="match status" value="1"/>
</dbReference>
<dbReference type="SUPFAM" id="SSF103025">
    <property type="entry name" value="Folate-binding domain"/>
    <property type="match status" value="1"/>
</dbReference>